<reference key="1">
    <citation type="journal article" date="2006" name="PLoS Biol.">
        <title>The genome of deep-sea vent chemolithoautotroph Thiomicrospira crunogena XCL-2.</title>
        <authorList>
            <person name="Scott K.M."/>
            <person name="Sievert S.M."/>
            <person name="Abril F.N."/>
            <person name="Ball L.A."/>
            <person name="Barrett C.J."/>
            <person name="Blake R.A."/>
            <person name="Boller A.J."/>
            <person name="Chain P.S.G."/>
            <person name="Clark J.A."/>
            <person name="Davis C.R."/>
            <person name="Detter C."/>
            <person name="Do K.F."/>
            <person name="Dobrinski K.P."/>
            <person name="Faza B.I."/>
            <person name="Fitzpatrick K.A."/>
            <person name="Freyermuth S.K."/>
            <person name="Harmer T.L."/>
            <person name="Hauser L.J."/>
            <person name="Huegler M."/>
            <person name="Kerfeld C.A."/>
            <person name="Klotz M.G."/>
            <person name="Kong W.W."/>
            <person name="Land M."/>
            <person name="Lapidus A."/>
            <person name="Larimer F.W."/>
            <person name="Longo D.L."/>
            <person name="Lucas S."/>
            <person name="Malfatti S.A."/>
            <person name="Massey S.E."/>
            <person name="Martin D.D."/>
            <person name="McCuddin Z."/>
            <person name="Meyer F."/>
            <person name="Moore J.L."/>
            <person name="Ocampo L.H. Jr."/>
            <person name="Paul J.H."/>
            <person name="Paulsen I.T."/>
            <person name="Reep D.K."/>
            <person name="Ren Q."/>
            <person name="Ross R.L."/>
            <person name="Sato P.Y."/>
            <person name="Thomas P."/>
            <person name="Tinkham L.E."/>
            <person name="Zeruth G.T."/>
        </authorList>
    </citation>
    <scope>NUCLEOTIDE SEQUENCE [LARGE SCALE GENOMIC DNA]</scope>
    <source>
        <strain>DSM 25203 / XCL-2</strain>
    </source>
</reference>
<protein>
    <recommendedName>
        <fullName evidence="1">Aspartate carbamoyltransferase catalytic subunit</fullName>
        <ecNumber evidence="1">2.1.3.2</ecNumber>
    </recommendedName>
    <alternativeName>
        <fullName evidence="1">Aspartate transcarbamylase</fullName>
        <shortName evidence="1">ATCase</shortName>
    </alternativeName>
</protein>
<comment type="function">
    <text evidence="1">Catalyzes the condensation of carbamoyl phosphate and aspartate to form carbamoyl aspartate and inorganic phosphate, the committed step in the de novo pyrimidine nucleotide biosynthesis pathway.</text>
</comment>
<comment type="catalytic activity">
    <reaction evidence="1">
        <text>carbamoyl phosphate + L-aspartate = N-carbamoyl-L-aspartate + phosphate + H(+)</text>
        <dbReference type="Rhea" id="RHEA:20013"/>
        <dbReference type="ChEBI" id="CHEBI:15378"/>
        <dbReference type="ChEBI" id="CHEBI:29991"/>
        <dbReference type="ChEBI" id="CHEBI:32814"/>
        <dbReference type="ChEBI" id="CHEBI:43474"/>
        <dbReference type="ChEBI" id="CHEBI:58228"/>
        <dbReference type="EC" id="2.1.3.2"/>
    </reaction>
</comment>
<comment type="pathway">
    <text evidence="1">Pyrimidine metabolism; UMP biosynthesis via de novo pathway; (S)-dihydroorotate from bicarbonate: step 2/3.</text>
</comment>
<comment type="subunit">
    <text evidence="1">Heterododecamer (2C3:3R2) of six catalytic PyrB chains organized as two trimers (C3), and six regulatory PyrI chains organized as three dimers (R2).</text>
</comment>
<comment type="similarity">
    <text evidence="1">Belongs to the aspartate/ornithine carbamoyltransferase superfamily. ATCase family.</text>
</comment>
<sequence length="339" mass="37718">MRLSTPNLQLNEQGKLRHFLTIEGLKQHHLTEILDVAESFINPVTGDISKVPSLHGKTIMNLFFEPSTRTLTTFEIAEKRLSADVVNLNIETSSTKKGETLLDTLWNLEAMLADVFVVRHSESGAAHFIAKHVAPHVHVVNAGDGQHAHPTQAMLDMFTIRKHKGDIFDLKVAIIGDVQHSRVVRSQIQALSILEAREIRVIGPKTLMPSHPEALGVHVYDHIEEGLDGVDVIINVRLQNERMKSALLPSEKEFFNLYGLTKERLSYAKPDAIVMHPGPVNRGVEIDSEVADGHQSVILEQVTYGIAVRMAVMSIIIDNAKQLNADKQITKKVTEEARS</sequence>
<organism>
    <name type="scientific">Hydrogenovibrio crunogenus (strain DSM 25203 / XCL-2)</name>
    <name type="common">Thiomicrospira crunogena</name>
    <dbReference type="NCBI Taxonomy" id="317025"/>
    <lineage>
        <taxon>Bacteria</taxon>
        <taxon>Pseudomonadati</taxon>
        <taxon>Pseudomonadota</taxon>
        <taxon>Gammaproteobacteria</taxon>
        <taxon>Thiotrichales</taxon>
        <taxon>Piscirickettsiaceae</taxon>
        <taxon>Hydrogenovibrio</taxon>
    </lineage>
</organism>
<proteinExistence type="inferred from homology"/>
<evidence type="ECO:0000255" key="1">
    <source>
        <dbReference type="HAMAP-Rule" id="MF_00001"/>
    </source>
</evidence>
<accession>Q31EK2</accession>
<name>PYRB_HYDCU</name>
<gene>
    <name evidence="1" type="primary">pyrB</name>
    <name type="ordered locus">Tcr_1829</name>
</gene>
<feature type="chain" id="PRO_0000321177" description="Aspartate carbamoyltransferase catalytic subunit">
    <location>
        <begin position="1"/>
        <end position="339"/>
    </location>
</feature>
<feature type="binding site" evidence="1">
    <location>
        <position position="69"/>
    </location>
    <ligand>
        <name>carbamoyl phosphate</name>
        <dbReference type="ChEBI" id="CHEBI:58228"/>
    </ligand>
</feature>
<feature type="binding site" evidence="1">
    <location>
        <position position="70"/>
    </location>
    <ligand>
        <name>carbamoyl phosphate</name>
        <dbReference type="ChEBI" id="CHEBI:58228"/>
    </ligand>
</feature>
<feature type="binding site" evidence="1">
    <location>
        <position position="97"/>
    </location>
    <ligand>
        <name>L-aspartate</name>
        <dbReference type="ChEBI" id="CHEBI:29991"/>
    </ligand>
</feature>
<feature type="binding site" evidence="1">
    <location>
        <position position="119"/>
    </location>
    <ligand>
        <name>carbamoyl phosphate</name>
        <dbReference type="ChEBI" id="CHEBI:58228"/>
    </ligand>
</feature>
<feature type="binding site" evidence="1">
    <location>
        <position position="149"/>
    </location>
    <ligand>
        <name>carbamoyl phosphate</name>
        <dbReference type="ChEBI" id="CHEBI:58228"/>
    </ligand>
</feature>
<feature type="binding site" evidence="1">
    <location>
        <position position="152"/>
    </location>
    <ligand>
        <name>carbamoyl phosphate</name>
        <dbReference type="ChEBI" id="CHEBI:58228"/>
    </ligand>
</feature>
<feature type="binding site" evidence="1">
    <location>
        <position position="182"/>
    </location>
    <ligand>
        <name>L-aspartate</name>
        <dbReference type="ChEBI" id="CHEBI:29991"/>
    </ligand>
</feature>
<feature type="binding site" evidence="1">
    <location>
        <position position="237"/>
    </location>
    <ligand>
        <name>L-aspartate</name>
        <dbReference type="ChEBI" id="CHEBI:29991"/>
    </ligand>
</feature>
<feature type="binding site" evidence="1">
    <location>
        <position position="278"/>
    </location>
    <ligand>
        <name>carbamoyl phosphate</name>
        <dbReference type="ChEBI" id="CHEBI:58228"/>
    </ligand>
</feature>
<feature type="binding site" evidence="1">
    <location>
        <position position="279"/>
    </location>
    <ligand>
        <name>carbamoyl phosphate</name>
        <dbReference type="ChEBI" id="CHEBI:58228"/>
    </ligand>
</feature>
<dbReference type="EC" id="2.1.3.2" evidence="1"/>
<dbReference type="EMBL" id="CP000109">
    <property type="protein sequence ID" value="ABB42421.1"/>
    <property type="molecule type" value="Genomic_DNA"/>
</dbReference>
<dbReference type="SMR" id="Q31EK2"/>
<dbReference type="STRING" id="317025.Tcr_1829"/>
<dbReference type="KEGG" id="tcx:Tcr_1829"/>
<dbReference type="eggNOG" id="COG0540">
    <property type="taxonomic scope" value="Bacteria"/>
</dbReference>
<dbReference type="HOGENOM" id="CLU_043846_2_0_6"/>
<dbReference type="OrthoDB" id="9774690at2"/>
<dbReference type="UniPathway" id="UPA00070">
    <property type="reaction ID" value="UER00116"/>
</dbReference>
<dbReference type="GO" id="GO:0005829">
    <property type="term" value="C:cytosol"/>
    <property type="evidence" value="ECO:0007669"/>
    <property type="project" value="TreeGrafter"/>
</dbReference>
<dbReference type="GO" id="GO:0016597">
    <property type="term" value="F:amino acid binding"/>
    <property type="evidence" value="ECO:0007669"/>
    <property type="project" value="InterPro"/>
</dbReference>
<dbReference type="GO" id="GO:0004070">
    <property type="term" value="F:aspartate carbamoyltransferase activity"/>
    <property type="evidence" value="ECO:0007669"/>
    <property type="project" value="UniProtKB-UniRule"/>
</dbReference>
<dbReference type="GO" id="GO:0006207">
    <property type="term" value="P:'de novo' pyrimidine nucleobase biosynthetic process"/>
    <property type="evidence" value="ECO:0007669"/>
    <property type="project" value="InterPro"/>
</dbReference>
<dbReference type="GO" id="GO:0044205">
    <property type="term" value="P:'de novo' UMP biosynthetic process"/>
    <property type="evidence" value="ECO:0007669"/>
    <property type="project" value="UniProtKB-UniRule"/>
</dbReference>
<dbReference type="GO" id="GO:0006520">
    <property type="term" value="P:amino acid metabolic process"/>
    <property type="evidence" value="ECO:0007669"/>
    <property type="project" value="InterPro"/>
</dbReference>
<dbReference type="FunFam" id="3.40.50.1370:FF:000007">
    <property type="entry name" value="Aspartate carbamoyltransferase"/>
    <property type="match status" value="1"/>
</dbReference>
<dbReference type="Gene3D" id="3.40.50.1370">
    <property type="entry name" value="Aspartate/ornithine carbamoyltransferase"/>
    <property type="match status" value="2"/>
</dbReference>
<dbReference type="HAMAP" id="MF_00001">
    <property type="entry name" value="Asp_carb_tr"/>
    <property type="match status" value="1"/>
</dbReference>
<dbReference type="InterPro" id="IPR006132">
    <property type="entry name" value="Asp/Orn_carbamoyltranf_P-bd"/>
</dbReference>
<dbReference type="InterPro" id="IPR006130">
    <property type="entry name" value="Asp/Orn_carbamoylTrfase"/>
</dbReference>
<dbReference type="InterPro" id="IPR036901">
    <property type="entry name" value="Asp/Orn_carbamoylTrfase_sf"/>
</dbReference>
<dbReference type="InterPro" id="IPR002082">
    <property type="entry name" value="Asp_carbamoyltransf"/>
</dbReference>
<dbReference type="InterPro" id="IPR006131">
    <property type="entry name" value="Asp_carbamoyltransf_Asp/Orn-bd"/>
</dbReference>
<dbReference type="NCBIfam" id="TIGR00670">
    <property type="entry name" value="asp_carb_tr"/>
    <property type="match status" value="1"/>
</dbReference>
<dbReference type="NCBIfam" id="NF002032">
    <property type="entry name" value="PRK00856.1"/>
    <property type="match status" value="1"/>
</dbReference>
<dbReference type="PANTHER" id="PTHR45753:SF6">
    <property type="entry name" value="ASPARTATE CARBAMOYLTRANSFERASE"/>
    <property type="match status" value="1"/>
</dbReference>
<dbReference type="PANTHER" id="PTHR45753">
    <property type="entry name" value="ORNITHINE CARBAMOYLTRANSFERASE, MITOCHONDRIAL"/>
    <property type="match status" value="1"/>
</dbReference>
<dbReference type="Pfam" id="PF00185">
    <property type="entry name" value="OTCace"/>
    <property type="match status" value="1"/>
</dbReference>
<dbReference type="Pfam" id="PF02729">
    <property type="entry name" value="OTCace_N"/>
    <property type="match status" value="1"/>
</dbReference>
<dbReference type="PRINTS" id="PR00100">
    <property type="entry name" value="AOTCASE"/>
</dbReference>
<dbReference type="PRINTS" id="PR00101">
    <property type="entry name" value="ATCASE"/>
</dbReference>
<dbReference type="SUPFAM" id="SSF53671">
    <property type="entry name" value="Aspartate/ornithine carbamoyltransferase"/>
    <property type="match status" value="1"/>
</dbReference>
<dbReference type="PROSITE" id="PS00097">
    <property type="entry name" value="CARBAMOYLTRANSFERASE"/>
    <property type="match status" value="1"/>
</dbReference>
<keyword id="KW-0665">Pyrimidine biosynthesis</keyword>
<keyword id="KW-0808">Transferase</keyword>